<organism>
    <name type="scientific">Streptococcus pyogenes serotype M6 (strain ATCC BAA-946 / MGAS10394)</name>
    <dbReference type="NCBI Taxonomy" id="286636"/>
    <lineage>
        <taxon>Bacteria</taxon>
        <taxon>Bacillati</taxon>
        <taxon>Bacillota</taxon>
        <taxon>Bacilli</taxon>
        <taxon>Lactobacillales</taxon>
        <taxon>Streptococcaceae</taxon>
        <taxon>Streptococcus</taxon>
    </lineage>
</organism>
<dbReference type="EC" id="7.1.2.2" evidence="1"/>
<dbReference type="EMBL" id="CP000003">
    <property type="protein sequence ID" value="AAT86313.1"/>
    <property type="status" value="ALT_INIT"/>
    <property type="molecule type" value="Genomic_DNA"/>
</dbReference>
<dbReference type="RefSeq" id="WP_010921823.1">
    <property type="nucleotide sequence ID" value="NC_006086.1"/>
</dbReference>
<dbReference type="SMR" id="Q5XE50"/>
<dbReference type="KEGG" id="spa:M6_Spy0178"/>
<dbReference type="HOGENOM" id="CLU_008162_3_1_9"/>
<dbReference type="Proteomes" id="UP000001167">
    <property type="component" value="Chromosome"/>
</dbReference>
<dbReference type="GO" id="GO:0045259">
    <property type="term" value="C:proton-transporting ATP synthase complex"/>
    <property type="evidence" value="ECO:0007669"/>
    <property type="project" value="UniProtKB-ARBA"/>
</dbReference>
<dbReference type="GO" id="GO:0005524">
    <property type="term" value="F:ATP binding"/>
    <property type="evidence" value="ECO:0007669"/>
    <property type="project" value="UniProtKB-UniRule"/>
</dbReference>
<dbReference type="GO" id="GO:0046933">
    <property type="term" value="F:proton-transporting ATP synthase activity, rotational mechanism"/>
    <property type="evidence" value="ECO:0007669"/>
    <property type="project" value="UniProtKB-UniRule"/>
</dbReference>
<dbReference type="GO" id="GO:0046961">
    <property type="term" value="F:proton-transporting ATPase activity, rotational mechanism"/>
    <property type="evidence" value="ECO:0007669"/>
    <property type="project" value="InterPro"/>
</dbReference>
<dbReference type="GO" id="GO:0042777">
    <property type="term" value="P:proton motive force-driven plasma membrane ATP synthesis"/>
    <property type="evidence" value="ECO:0007669"/>
    <property type="project" value="UniProtKB-UniRule"/>
</dbReference>
<dbReference type="CDD" id="cd18111">
    <property type="entry name" value="ATP-synt_V_A-type_alpha_C"/>
    <property type="match status" value="1"/>
</dbReference>
<dbReference type="CDD" id="cd18119">
    <property type="entry name" value="ATP-synt_V_A-type_alpha_N"/>
    <property type="match status" value="1"/>
</dbReference>
<dbReference type="CDD" id="cd01134">
    <property type="entry name" value="V_A-ATPase_A"/>
    <property type="match status" value="1"/>
</dbReference>
<dbReference type="FunFam" id="3.40.50.300:FF:000675">
    <property type="entry name" value="V-type ATP synthase alpha chain"/>
    <property type="match status" value="1"/>
</dbReference>
<dbReference type="FunFam" id="2.40.30.20:FF:000002">
    <property type="entry name" value="V-type proton ATPase catalytic subunit A"/>
    <property type="match status" value="1"/>
</dbReference>
<dbReference type="FunFam" id="2.40.50.100:FF:000008">
    <property type="entry name" value="V-type proton ATPase catalytic subunit A"/>
    <property type="match status" value="1"/>
</dbReference>
<dbReference type="Gene3D" id="2.40.30.20">
    <property type="match status" value="1"/>
</dbReference>
<dbReference type="Gene3D" id="2.40.50.100">
    <property type="match status" value="1"/>
</dbReference>
<dbReference type="Gene3D" id="1.10.1140.10">
    <property type="entry name" value="Bovine Mitochondrial F1-atpase, Atp Synthase Beta Chain, Chain D, domain 3"/>
    <property type="match status" value="1"/>
</dbReference>
<dbReference type="Gene3D" id="3.40.50.300">
    <property type="entry name" value="P-loop containing nucleotide triphosphate hydrolases"/>
    <property type="match status" value="1"/>
</dbReference>
<dbReference type="HAMAP" id="MF_00309">
    <property type="entry name" value="ATP_synth_A_arch"/>
    <property type="match status" value="1"/>
</dbReference>
<dbReference type="InterPro" id="IPR055190">
    <property type="entry name" value="ATP-synt_VA_C"/>
</dbReference>
<dbReference type="InterPro" id="IPR031686">
    <property type="entry name" value="ATP-synth_a_Xtn"/>
</dbReference>
<dbReference type="InterPro" id="IPR023366">
    <property type="entry name" value="ATP_synth_asu-like_sf"/>
</dbReference>
<dbReference type="InterPro" id="IPR020003">
    <property type="entry name" value="ATPase_a/bsu_AS"/>
</dbReference>
<dbReference type="InterPro" id="IPR004100">
    <property type="entry name" value="ATPase_F1/V1/A1_a/bsu_N"/>
</dbReference>
<dbReference type="InterPro" id="IPR036121">
    <property type="entry name" value="ATPase_F1/V1/A1_a/bsu_N_sf"/>
</dbReference>
<dbReference type="InterPro" id="IPR000194">
    <property type="entry name" value="ATPase_F1/V1/A1_a/bsu_nucl-bd"/>
</dbReference>
<dbReference type="InterPro" id="IPR024034">
    <property type="entry name" value="ATPase_F1/V1_b/a_C"/>
</dbReference>
<dbReference type="InterPro" id="IPR027417">
    <property type="entry name" value="P-loop_NTPase"/>
</dbReference>
<dbReference type="InterPro" id="IPR022878">
    <property type="entry name" value="V-ATPase_asu"/>
</dbReference>
<dbReference type="NCBIfam" id="NF003220">
    <property type="entry name" value="PRK04192.1"/>
    <property type="match status" value="1"/>
</dbReference>
<dbReference type="PANTHER" id="PTHR43607:SF1">
    <property type="entry name" value="H(+)-TRANSPORTING TWO-SECTOR ATPASE"/>
    <property type="match status" value="1"/>
</dbReference>
<dbReference type="PANTHER" id="PTHR43607">
    <property type="entry name" value="V-TYPE PROTON ATPASE CATALYTIC SUBUNIT A"/>
    <property type="match status" value="1"/>
</dbReference>
<dbReference type="Pfam" id="PF00006">
    <property type="entry name" value="ATP-synt_ab"/>
    <property type="match status" value="1"/>
</dbReference>
<dbReference type="Pfam" id="PF02874">
    <property type="entry name" value="ATP-synt_ab_N"/>
    <property type="match status" value="1"/>
</dbReference>
<dbReference type="Pfam" id="PF16886">
    <property type="entry name" value="ATP-synt_ab_Xtn"/>
    <property type="match status" value="1"/>
</dbReference>
<dbReference type="Pfam" id="PF22919">
    <property type="entry name" value="ATP-synt_VA_C"/>
    <property type="match status" value="1"/>
</dbReference>
<dbReference type="SUPFAM" id="SSF47917">
    <property type="entry name" value="C-terminal domain of alpha and beta subunits of F1 ATP synthase"/>
    <property type="match status" value="1"/>
</dbReference>
<dbReference type="SUPFAM" id="SSF50615">
    <property type="entry name" value="N-terminal domain of alpha and beta subunits of F1 ATP synthase"/>
    <property type="match status" value="1"/>
</dbReference>
<dbReference type="SUPFAM" id="SSF52540">
    <property type="entry name" value="P-loop containing nucleoside triphosphate hydrolases"/>
    <property type="match status" value="1"/>
</dbReference>
<dbReference type="PROSITE" id="PS00152">
    <property type="entry name" value="ATPASE_ALPHA_BETA"/>
    <property type="match status" value="1"/>
</dbReference>
<reference key="1">
    <citation type="journal article" date="2004" name="J. Infect. Dis.">
        <title>Progress toward characterization of the group A Streptococcus metagenome: complete genome sequence of a macrolide-resistant serotype M6 strain.</title>
        <authorList>
            <person name="Banks D.J."/>
            <person name="Porcella S.F."/>
            <person name="Barbian K.D."/>
            <person name="Beres S.B."/>
            <person name="Philips L.E."/>
            <person name="Voyich J.M."/>
            <person name="DeLeo F.R."/>
            <person name="Martin J.M."/>
            <person name="Somerville G.A."/>
            <person name="Musser J.M."/>
        </authorList>
    </citation>
    <scope>NUCLEOTIDE SEQUENCE [LARGE SCALE GENOMIC DNA]</scope>
    <source>
        <strain>ATCC BAA-946 / MGAS10394</strain>
    </source>
</reference>
<proteinExistence type="inferred from homology"/>
<comment type="function">
    <text evidence="1">Produces ATP from ADP in the presence of a proton gradient across the membrane. The V-type alpha chain is a catalytic subunit.</text>
</comment>
<comment type="catalytic activity">
    <reaction evidence="1">
        <text>ATP + H2O + 4 H(+)(in) = ADP + phosphate + 5 H(+)(out)</text>
        <dbReference type="Rhea" id="RHEA:57720"/>
        <dbReference type="ChEBI" id="CHEBI:15377"/>
        <dbReference type="ChEBI" id="CHEBI:15378"/>
        <dbReference type="ChEBI" id="CHEBI:30616"/>
        <dbReference type="ChEBI" id="CHEBI:43474"/>
        <dbReference type="ChEBI" id="CHEBI:456216"/>
        <dbReference type="EC" id="7.1.2.2"/>
    </reaction>
</comment>
<comment type="similarity">
    <text evidence="1">Belongs to the ATPase alpha/beta chains family.</text>
</comment>
<comment type="sequence caution" evidence="2">
    <conflict type="erroneous initiation">
        <sequence resource="EMBL-CDS" id="AAT86313"/>
    </conflict>
</comment>
<keyword id="KW-0066">ATP synthesis</keyword>
<keyword id="KW-0067">ATP-binding</keyword>
<keyword id="KW-0375">Hydrogen ion transport</keyword>
<keyword id="KW-0406">Ion transport</keyword>
<keyword id="KW-0547">Nucleotide-binding</keyword>
<keyword id="KW-1278">Translocase</keyword>
<keyword id="KW-0813">Transport</keyword>
<feature type="chain" id="PRO_0000144617" description="V-type ATP synthase alpha chain">
    <location>
        <begin position="1"/>
        <end position="591"/>
    </location>
</feature>
<feature type="binding site" evidence="1">
    <location>
        <begin position="233"/>
        <end position="240"/>
    </location>
    <ligand>
        <name>ATP</name>
        <dbReference type="ChEBI" id="CHEBI:30616"/>
    </ligand>
</feature>
<sequence>MNQGKIITVSGPLVVASGMQEANIQDICRVGHLGLVGEIIEMRRDQASIQVYEETSGIGPGEPVVTTGCPLSVELGPGLISEMFDGIQRPLDRFQKATDSDFLIRGVAIPSLDRKAKWAFIPKLSVGQEVVAGDILGTVQETAVIEHRIMVPYKVSGTLVAIHAGDFTVTDTVYEIKQEDGSIYQGSLMQTWPVRQSRPVAQKLIPVEPLVTGQRVIDTFFPVTKGGAAAVPGPFGAGKTVVQHQIAKFANVDIVIYVGCGERGNEMTDVLNEFPELIDPNTGQSIMERTVLIANTSNMPVAAREASIYTGITIAEYFRDMGYSVAIMADSTSRWAEALREMSGRLQEMPGDEGYPAYLGSRIAEYYERAGRVRTLGSQEREGTITAIGAVSPPGGDISEPVTQNTLRIVKVFWGLDAPLAQRRHFPAINWLTSYSLYQDDVGSYIDRKQQSNWSNKVTRAMAILQREASLEEIVRLVGLDSLSEQDRLTMAVARQIREDYLQQNAFDSVDTFTSFPKQEAMLTNILTFNEEASKALSLGAYFNEIMEGTAQVRDRIARSKFIPEENLEQIKGLTQKVTKEIHHVLAKGGI</sequence>
<protein>
    <recommendedName>
        <fullName evidence="1">V-type ATP synthase alpha chain</fullName>
        <ecNumber evidence="1">7.1.2.2</ecNumber>
    </recommendedName>
    <alternativeName>
        <fullName evidence="1">V-ATPase subunit A</fullName>
    </alternativeName>
</protein>
<name>VATA_STRP6</name>
<evidence type="ECO:0000255" key="1">
    <source>
        <dbReference type="HAMAP-Rule" id="MF_00309"/>
    </source>
</evidence>
<evidence type="ECO:0000305" key="2"/>
<gene>
    <name evidence="1" type="primary">atpA</name>
    <name type="ordered locus">M6_Spy0178</name>
</gene>
<accession>Q5XE50</accession>